<accession>Q48QH8</accession>
<keyword id="KW-0067">ATP-binding</keyword>
<keyword id="KW-0963">Cytoplasm</keyword>
<keyword id="KW-0547">Nucleotide-binding</keyword>
<keyword id="KW-0548">Nucleotidyltransferase</keyword>
<keyword id="KW-0808">Transferase</keyword>
<keyword id="KW-0819">tRNA processing</keyword>
<dbReference type="EC" id="2.7.7.87" evidence="1"/>
<dbReference type="EMBL" id="CP000058">
    <property type="protein sequence ID" value="AAZ34812.1"/>
    <property type="molecule type" value="Genomic_DNA"/>
</dbReference>
<dbReference type="RefSeq" id="WP_004662860.1">
    <property type="nucleotide sequence ID" value="NC_005773.3"/>
</dbReference>
<dbReference type="SMR" id="Q48QH8"/>
<dbReference type="KEGG" id="psp:PSPPH_0024"/>
<dbReference type="eggNOG" id="COG0009">
    <property type="taxonomic scope" value="Bacteria"/>
</dbReference>
<dbReference type="HOGENOM" id="CLU_031397_6_0_6"/>
<dbReference type="Proteomes" id="UP000000551">
    <property type="component" value="Chromosome"/>
</dbReference>
<dbReference type="GO" id="GO:0005737">
    <property type="term" value="C:cytoplasm"/>
    <property type="evidence" value="ECO:0007669"/>
    <property type="project" value="UniProtKB-SubCell"/>
</dbReference>
<dbReference type="GO" id="GO:0005524">
    <property type="term" value="F:ATP binding"/>
    <property type="evidence" value="ECO:0007669"/>
    <property type="project" value="UniProtKB-UniRule"/>
</dbReference>
<dbReference type="GO" id="GO:0003725">
    <property type="term" value="F:double-stranded RNA binding"/>
    <property type="evidence" value="ECO:0007669"/>
    <property type="project" value="InterPro"/>
</dbReference>
<dbReference type="GO" id="GO:0061710">
    <property type="term" value="F:L-threonylcarbamoyladenylate synthase"/>
    <property type="evidence" value="ECO:0007669"/>
    <property type="project" value="UniProtKB-EC"/>
</dbReference>
<dbReference type="GO" id="GO:0000049">
    <property type="term" value="F:tRNA binding"/>
    <property type="evidence" value="ECO:0007669"/>
    <property type="project" value="TreeGrafter"/>
</dbReference>
<dbReference type="GO" id="GO:0006450">
    <property type="term" value="P:regulation of translational fidelity"/>
    <property type="evidence" value="ECO:0007669"/>
    <property type="project" value="TreeGrafter"/>
</dbReference>
<dbReference type="GO" id="GO:0002949">
    <property type="term" value="P:tRNA threonylcarbamoyladenosine modification"/>
    <property type="evidence" value="ECO:0007669"/>
    <property type="project" value="UniProtKB-UniRule"/>
</dbReference>
<dbReference type="FunFam" id="3.90.870.10:FF:000004">
    <property type="entry name" value="Threonylcarbamoyl-AMP synthase"/>
    <property type="match status" value="1"/>
</dbReference>
<dbReference type="Gene3D" id="3.90.870.10">
    <property type="entry name" value="DHBP synthase"/>
    <property type="match status" value="1"/>
</dbReference>
<dbReference type="HAMAP" id="MF_01852">
    <property type="entry name" value="TsaC"/>
    <property type="match status" value="1"/>
</dbReference>
<dbReference type="InterPro" id="IPR017945">
    <property type="entry name" value="DHBP_synth_RibB-like_a/b_dom"/>
</dbReference>
<dbReference type="InterPro" id="IPR006070">
    <property type="entry name" value="Sua5-like_dom"/>
</dbReference>
<dbReference type="InterPro" id="IPR023535">
    <property type="entry name" value="TC-AMP_synthase"/>
</dbReference>
<dbReference type="InterPro" id="IPR050156">
    <property type="entry name" value="TC-AMP_synthase_SUA5"/>
</dbReference>
<dbReference type="PANTHER" id="PTHR17490">
    <property type="entry name" value="SUA5"/>
    <property type="match status" value="1"/>
</dbReference>
<dbReference type="PANTHER" id="PTHR17490:SF18">
    <property type="entry name" value="THREONYLCARBAMOYL-AMP SYNTHASE"/>
    <property type="match status" value="1"/>
</dbReference>
<dbReference type="Pfam" id="PF01300">
    <property type="entry name" value="Sua5_yciO_yrdC"/>
    <property type="match status" value="1"/>
</dbReference>
<dbReference type="SUPFAM" id="SSF55821">
    <property type="entry name" value="YrdC/RibB"/>
    <property type="match status" value="1"/>
</dbReference>
<dbReference type="PROSITE" id="PS51163">
    <property type="entry name" value="YRDC"/>
    <property type="match status" value="1"/>
</dbReference>
<name>TSAC_PSE14</name>
<protein>
    <recommendedName>
        <fullName evidence="1">Threonylcarbamoyl-AMP synthase</fullName>
        <shortName evidence="1">TC-AMP synthase</shortName>
        <ecNumber evidence="1">2.7.7.87</ecNumber>
    </recommendedName>
    <alternativeName>
        <fullName evidence="1">L-threonylcarbamoyladenylate synthase</fullName>
    </alternativeName>
    <alternativeName>
        <fullName evidence="1">t(6)A37 threonylcarbamoyladenosine biosynthesis protein TsaC</fullName>
    </alternativeName>
    <alternativeName>
        <fullName evidence="1">tRNA threonylcarbamoyladenosine biosynthesis protein TsaC</fullName>
    </alternativeName>
</protein>
<evidence type="ECO:0000255" key="1">
    <source>
        <dbReference type="HAMAP-Rule" id="MF_01852"/>
    </source>
</evidence>
<reference key="1">
    <citation type="journal article" date="2005" name="J. Bacteriol.">
        <title>Whole-genome sequence analysis of Pseudomonas syringae pv. phaseolicola 1448A reveals divergence among pathovars in genes involved in virulence and transposition.</title>
        <authorList>
            <person name="Joardar V."/>
            <person name="Lindeberg M."/>
            <person name="Jackson R.W."/>
            <person name="Selengut J."/>
            <person name="Dodson R."/>
            <person name="Brinkac L.M."/>
            <person name="Daugherty S.C."/>
            <person name="DeBoy R.T."/>
            <person name="Durkin A.S."/>
            <person name="Gwinn Giglio M."/>
            <person name="Madupu R."/>
            <person name="Nelson W.C."/>
            <person name="Rosovitz M.J."/>
            <person name="Sullivan S.A."/>
            <person name="Crabtree J."/>
            <person name="Creasy T."/>
            <person name="Davidsen T.M."/>
            <person name="Haft D.H."/>
            <person name="Zafar N."/>
            <person name="Zhou L."/>
            <person name="Halpin R."/>
            <person name="Holley T."/>
            <person name="Khouri H.M."/>
            <person name="Feldblyum T.V."/>
            <person name="White O."/>
            <person name="Fraser C.M."/>
            <person name="Chatterjee A.K."/>
            <person name="Cartinhour S."/>
            <person name="Schneider D."/>
            <person name="Mansfield J.W."/>
            <person name="Collmer A."/>
            <person name="Buell R."/>
        </authorList>
    </citation>
    <scope>NUCLEOTIDE SEQUENCE [LARGE SCALE GENOMIC DNA]</scope>
    <source>
        <strain>1448A / Race 6</strain>
    </source>
</reference>
<sequence>MVSSWRVQQAAQDIRAGAVIAYPTEAVWGLGCDPWDEEAVYRLLAIKSRPVEKGLILIADNIRQFDFLFEDFPQLWLDRMASTWPGPNTWLVPHQNLLPEWITGIHETVALRVTDHPTVRELCALVGPLISTSANPAGRPAARSRLRVEQYFRGQIDGVLGGSLGGRRNPSVIRDIATGQVMRAG</sequence>
<comment type="function">
    <text evidence="1">Required for the formation of a threonylcarbamoyl group on adenosine at position 37 (t(6)A37) in tRNAs that read codons beginning with adenine. Catalyzes the conversion of L-threonine, HCO(3)(-)/CO(2) and ATP to give threonylcarbamoyl-AMP (TC-AMP) as the acyladenylate intermediate, with the release of diphosphate.</text>
</comment>
<comment type="catalytic activity">
    <reaction evidence="1">
        <text>L-threonine + hydrogencarbonate + ATP = L-threonylcarbamoyladenylate + diphosphate + H2O</text>
        <dbReference type="Rhea" id="RHEA:36407"/>
        <dbReference type="ChEBI" id="CHEBI:15377"/>
        <dbReference type="ChEBI" id="CHEBI:17544"/>
        <dbReference type="ChEBI" id="CHEBI:30616"/>
        <dbReference type="ChEBI" id="CHEBI:33019"/>
        <dbReference type="ChEBI" id="CHEBI:57926"/>
        <dbReference type="ChEBI" id="CHEBI:73682"/>
        <dbReference type="EC" id="2.7.7.87"/>
    </reaction>
</comment>
<comment type="subcellular location">
    <subcellularLocation>
        <location evidence="1">Cytoplasm</location>
    </subcellularLocation>
</comment>
<comment type="similarity">
    <text evidence="1">Belongs to the SUA5 family. TsaC subfamily.</text>
</comment>
<proteinExistence type="inferred from homology"/>
<gene>
    <name evidence="1" type="primary">tsaC</name>
    <name type="synonym">rimN</name>
    <name type="ordered locus">PSPPH_0024</name>
</gene>
<feature type="chain" id="PRO_0000352960" description="Threonylcarbamoyl-AMP synthase">
    <location>
        <begin position="1"/>
        <end position="185"/>
    </location>
</feature>
<feature type="domain" description="YrdC-like" evidence="1">
    <location>
        <begin position="4"/>
        <end position="185"/>
    </location>
</feature>
<organism>
    <name type="scientific">Pseudomonas savastanoi pv. phaseolicola (strain 1448A / Race 6)</name>
    <name type="common">Pseudomonas syringae pv. phaseolicola (strain 1448A / Race 6)</name>
    <dbReference type="NCBI Taxonomy" id="264730"/>
    <lineage>
        <taxon>Bacteria</taxon>
        <taxon>Pseudomonadati</taxon>
        <taxon>Pseudomonadota</taxon>
        <taxon>Gammaproteobacteria</taxon>
        <taxon>Pseudomonadales</taxon>
        <taxon>Pseudomonadaceae</taxon>
        <taxon>Pseudomonas</taxon>
    </lineage>
</organism>